<protein>
    <recommendedName>
        <fullName>Hsp70 nucleotide exchange factor FES1</fullName>
    </recommendedName>
</protein>
<dbReference type="EMBL" id="DS231666">
    <property type="protein sequence ID" value="ESU13578.1"/>
    <property type="molecule type" value="Genomic_DNA"/>
</dbReference>
<dbReference type="EMBL" id="HG970335">
    <property type="protein sequence ID" value="CEF82893.1"/>
    <property type="molecule type" value="Genomic_DNA"/>
</dbReference>
<dbReference type="RefSeq" id="XP_011327085.1">
    <property type="nucleotide sequence ID" value="XM_011328783.1"/>
</dbReference>
<dbReference type="SMR" id="Q4I624"/>
<dbReference type="FunCoup" id="Q4I624">
    <property type="interactions" value="209"/>
</dbReference>
<dbReference type="STRING" id="229533.Q4I624"/>
<dbReference type="GeneID" id="23554417"/>
<dbReference type="KEGG" id="fgr:FGSG_07334"/>
<dbReference type="VEuPathDB" id="FungiDB:FGRAMPH1_01G24549"/>
<dbReference type="eggNOG" id="KOG2160">
    <property type="taxonomic scope" value="Eukaryota"/>
</dbReference>
<dbReference type="HOGENOM" id="CLU_084507_0_0_1"/>
<dbReference type="InParanoid" id="Q4I624"/>
<dbReference type="OrthoDB" id="28730at110618"/>
<dbReference type="Proteomes" id="UP000070720">
    <property type="component" value="Chromosome 4"/>
</dbReference>
<dbReference type="GO" id="GO:0005783">
    <property type="term" value="C:endoplasmic reticulum"/>
    <property type="evidence" value="ECO:0007669"/>
    <property type="project" value="TreeGrafter"/>
</dbReference>
<dbReference type="GO" id="GO:0000774">
    <property type="term" value="F:adenyl-nucleotide exchange factor activity"/>
    <property type="evidence" value="ECO:0007669"/>
    <property type="project" value="TreeGrafter"/>
</dbReference>
<dbReference type="GO" id="GO:0006417">
    <property type="term" value="P:regulation of translation"/>
    <property type="evidence" value="ECO:0007669"/>
    <property type="project" value="UniProtKB-KW"/>
</dbReference>
<dbReference type="FunFam" id="1.25.10.10:FF:000434">
    <property type="entry name" value="Hsp70 nucleotide exchange factor fes1"/>
    <property type="match status" value="1"/>
</dbReference>
<dbReference type="Gene3D" id="1.25.10.10">
    <property type="entry name" value="Leucine-rich Repeat Variant"/>
    <property type="match status" value="1"/>
</dbReference>
<dbReference type="InterPro" id="IPR011989">
    <property type="entry name" value="ARM-like"/>
</dbReference>
<dbReference type="InterPro" id="IPR016024">
    <property type="entry name" value="ARM-type_fold"/>
</dbReference>
<dbReference type="InterPro" id="IPR000225">
    <property type="entry name" value="Armadillo"/>
</dbReference>
<dbReference type="InterPro" id="IPR050693">
    <property type="entry name" value="Hsp70_NEF-Inhibitors"/>
</dbReference>
<dbReference type="InterPro" id="IPR013918">
    <property type="entry name" value="Nucleotide_exch_fac_Fes1"/>
</dbReference>
<dbReference type="PANTHER" id="PTHR19316:SF18">
    <property type="entry name" value="HSP70-BINDING PROTEIN 1"/>
    <property type="match status" value="1"/>
</dbReference>
<dbReference type="PANTHER" id="PTHR19316">
    <property type="entry name" value="PROTEIN FOLDING REGULATOR"/>
    <property type="match status" value="1"/>
</dbReference>
<dbReference type="Pfam" id="PF08609">
    <property type="entry name" value="Fes1"/>
    <property type="match status" value="1"/>
</dbReference>
<dbReference type="SUPFAM" id="SSF48371">
    <property type="entry name" value="ARM repeat"/>
    <property type="match status" value="1"/>
</dbReference>
<dbReference type="PROSITE" id="PS50176">
    <property type="entry name" value="ARM_REPEAT"/>
    <property type="match status" value="1"/>
</dbReference>
<feature type="chain" id="PRO_0000285395" description="Hsp70 nucleotide exchange factor FES1">
    <location>
        <begin position="1"/>
        <end position="213"/>
    </location>
</feature>
<feature type="repeat" description="ARM 1">
    <location>
        <begin position="22"/>
        <end position="63"/>
    </location>
</feature>
<feature type="repeat" description="ARM 2">
    <location>
        <begin position="85"/>
        <end position="124"/>
    </location>
</feature>
<feature type="repeat" description="ARM 3">
    <location>
        <begin position="127"/>
        <end position="168"/>
    </location>
</feature>
<comment type="function">
    <text evidence="1">Functions as a nucleotide exchange factor (NEF) for Hsp70 chaperones which accelerates the release of ADP. Required for fully efficient Hsp70-mediated folding of proteins (By similarity).</text>
</comment>
<comment type="subcellular location">
    <subcellularLocation>
        <location evidence="1">Cytoplasm</location>
    </subcellularLocation>
</comment>
<comment type="similarity">
    <text evidence="2">Belongs to the FES1 family.</text>
</comment>
<accession>Q4I624</accession>
<accession>A0A0E0S8Y0</accession>
<accession>V6RG65</accession>
<reference key="1">
    <citation type="journal article" date="2007" name="Science">
        <title>The Fusarium graminearum genome reveals a link between localized polymorphism and pathogen specialization.</title>
        <authorList>
            <person name="Cuomo C.A."/>
            <person name="Gueldener U."/>
            <person name="Xu J.-R."/>
            <person name="Trail F."/>
            <person name="Turgeon B.G."/>
            <person name="Di Pietro A."/>
            <person name="Walton J.D."/>
            <person name="Ma L.-J."/>
            <person name="Baker S.E."/>
            <person name="Rep M."/>
            <person name="Adam G."/>
            <person name="Antoniw J."/>
            <person name="Baldwin T."/>
            <person name="Calvo S.E."/>
            <person name="Chang Y.-L."/>
            <person name="DeCaprio D."/>
            <person name="Gale L.R."/>
            <person name="Gnerre S."/>
            <person name="Goswami R.S."/>
            <person name="Hammond-Kosack K."/>
            <person name="Harris L.J."/>
            <person name="Hilburn K."/>
            <person name="Kennell J.C."/>
            <person name="Kroken S."/>
            <person name="Magnuson J.K."/>
            <person name="Mannhaupt G."/>
            <person name="Mauceli E.W."/>
            <person name="Mewes H.-W."/>
            <person name="Mitterbauer R."/>
            <person name="Muehlbauer G."/>
            <person name="Muensterkoetter M."/>
            <person name="Nelson D."/>
            <person name="O'Donnell K."/>
            <person name="Ouellet T."/>
            <person name="Qi W."/>
            <person name="Quesneville H."/>
            <person name="Roncero M.I.G."/>
            <person name="Seong K.-Y."/>
            <person name="Tetko I.V."/>
            <person name="Urban M."/>
            <person name="Waalwijk C."/>
            <person name="Ward T.J."/>
            <person name="Yao J."/>
            <person name="Birren B.W."/>
            <person name="Kistler H.C."/>
        </authorList>
    </citation>
    <scope>NUCLEOTIDE SEQUENCE [LARGE SCALE GENOMIC DNA]</scope>
    <source>
        <strain>ATCC MYA-4620 / CBS 123657 / FGSC 9075 / NRRL 31084 / PH-1</strain>
    </source>
</reference>
<reference key="2">
    <citation type="journal article" date="2010" name="Nature">
        <title>Comparative genomics reveals mobile pathogenicity chromosomes in Fusarium.</title>
        <authorList>
            <person name="Ma L.-J."/>
            <person name="van der Does H.C."/>
            <person name="Borkovich K.A."/>
            <person name="Coleman J.J."/>
            <person name="Daboussi M.-J."/>
            <person name="Di Pietro A."/>
            <person name="Dufresne M."/>
            <person name="Freitag M."/>
            <person name="Grabherr M."/>
            <person name="Henrissat B."/>
            <person name="Houterman P.M."/>
            <person name="Kang S."/>
            <person name="Shim W.-B."/>
            <person name="Woloshuk C."/>
            <person name="Xie X."/>
            <person name="Xu J.-R."/>
            <person name="Antoniw J."/>
            <person name="Baker S.E."/>
            <person name="Bluhm B.H."/>
            <person name="Breakspear A."/>
            <person name="Brown D.W."/>
            <person name="Butchko R.A.E."/>
            <person name="Chapman S."/>
            <person name="Coulson R."/>
            <person name="Coutinho P.M."/>
            <person name="Danchin E.G.J."/>
            <person name="Diener A."/>
            <person name="Gale L.R."/>
            <person name="Gardiner D.M."/>
            <person name="Goff S."/>
            <person name="Hammond-Kosack K.E."/>
            <person name="Hilburn K."/>
            <person name="Hua-Van A."/>
            <person name="Jonkers W."/>
            <person name="Kazan K."/>
            <person name="Kodira C.D."/>
            <person name="Koehrsen M."/>
            <person name="Kumar L."/>
            <person name="Lee Y.-H."/>
            <person name="Li L."/>
            <person name="Manners J.M."/>
            <person name="Miranda-Saavedra D."/>
            <person name="Mukherjee M."/>
            <person name="Park G."/>
            <person name="Park J."/>
            <person name="Park S.-Y."/>
            <person name="Proctor R.H."/>
            <person name="Regev A."/>
            <person name="Ruiz-Roldan M.C."/>
            <person name="Sain D."/>
            <person name="Sakthikumar S."/>
            <person name="Sykes S."/>
            <person name="Schwartz D.C."/>
            <person name="Turgeon B.G."/>
            <person name="Wapinski I."/>
            <person name="Yoder O."/>
            <person name="Young S."/>
            <person name="Zeng Q."/>
            <person name="Zhou S."/>
            <person name="Galagan J."/>
            <person name="Cuomo C.A."/>
            <person name="Kistler H.C."/>
            <person name="Rep M."/>
        </authorList>
    </citation>
    <scope>GENOME REANNOTATION</scope>
    <source>
        <strain>ATCC MYA-4620 / CBS 123657 / FGSC 9075 / NRRL 31084 / PH-1</strain>
    </source>
</reference>
<reference key="3">
    <citation type="journal article" date="2015" name="BMC Genomics">
        <title>The completed genome sequence of the pathogenic ascomycete fungus Fusarium graminearum.</title>
        <authorList>
            <person name="King R."/>
            <person name="Urban M."/>
            <person name="Hammond-Kosack M.C.U."/>
            <person name="Hassani-Pak K."/>
            <person name="Hammond-Kosack K.E."/>
        </authorList>
    </citation>
    <scope>NUCLEOTIDE SEQUENCE [LARGE SCALE GENOMIC DNA]</scope>
    <source>
        <strain>ATCC MYA-4620 / CBS 123657 / FGSC 9075 / NRRL 31084 / PH-1</strain>
    </source>
</reference>
<keyword id="KW-0963">Cytoplasm</keyword>
<keyword id="KW-1185">Reference proteome</keyword>
<keyword id="KW-0677">Repeat</keyword>
<keyword id="KW-0810">Translation regulation</keyword>
<proteinExistence type="inferred from homology"/>
<gene>
    <name type="primary">FES1</name>
    <name type="ORF">FGRRES_07334</name>
    <name type="ORF">FGSG_07334</name>
</gene>
<evidence type="ECO:0000250" key="1"/>
<evidence type="ECO:0000305" key="2"/>
<sequence length="213" mass="23553">MADPRLNELLKWSIEQSEATKNDPDAPPAKTQLTPELMAALMGGPSDADLMKASMEIITSDNAEEVSLDDKLVAFDNFEQLIENLDNANNIANLSLWTPLLDQLKHEEREMRKMAAWCVGTAVQNNEKTQERLLAVGGVPMLVDLATKEDEPVDVRRKAVYALSSAVRNYQPAMDLFADELTKKGHKTDKVDATSMEAVDEVVNGLREKIGKA</sequence>
<name>FES1_GIBZE</name>
<organism>
    <name type="scientific">Gibberella zeae (strain ATCC MYA-4620 / CBS 123657 / FGSC 9075 / NRRL 31084 / PH-1)</name>
    <name type="common">Wheat head blight fungus</name>
    <name type="synonym">Fusarium graminearum</name>
    <dbReference type="NCBI Taxonomy" id="229533"/>
    <lineage>
        <taxon>Eukaryota</taxon>
        <taxon>Fungi</taxon>
        <taxon>Dikarya</taxon>
        <taxon>Ascomycota</taxon>
        <taxon>Pezizomycotina</taxon>
        <taxon>Sordariomycetes</taxon>
        <taxon>Hypocreomycetidae</taxon>
        <taxon>Hypocreales</taxon>
        <taxon>Nectriaceae</taxon>
        <taxon>Fusarium</taxon>
    </lineage>
</organism>